<organism>
    <name type="scientific">Rhodopseudomonas palustris (strain ATCC BAA-98 / CGA009)</name>
    <dbReference type="NCBI Taxonomy" id="258594"/>
    <lineage>
        <taxon>Bacteria</taxon>
        <taxon>Pseudomonadati</taxon>
        <taxon>Pseudomonadota</taxon>
        <taxon>Alphaproteobacteria</taxon>
        <taxon>Hyphomicrobiales</taxon>
        <taxon>Nitrobacteraceae</taxon>
        <taxon>Rhodopseudomonas</taxon>
    </lineage>
</organism>
<proteinExistence type="inferred from homology"/>
<accession>Q6N5T0</accession>
<protein>
    <recommendedName>
        <fullName evidence="1">Anthranilate phosphoribosyltransferase</fullName>
        <ecNumber evidence="1">2.4.2.18</ecNumber>
    </recommendedName>
</protein>
<reference key="1">
    <citation type="journal article" date="2004" name="Nat. Biotechnol.">
        <title>Complete genome sequence of the metabolically versatile photosynthetic bacterium Rhodopseudomonas palustris.</title>
        <authorList>
            <person name="Larimer F.W."/>
            <person name="Chain P."/>
            <person name="Hauser L."/>
            <person name="Lamerdin J.E."/>
            <person name="Malfatti S."/>
            <person name="Do L."/>
            <person name="Land M.L."/>
            <person name="Pelletier D.A."/>
            <person name="Beatty J.T."/>
            <person name="Lang A.S."/>
            <person name="Tabita F.R."/>
            <person name="Gibson J.L."/>
            <person name="Hanson T.E."/>
            <person name="Bobst C."/>
            <person name="Torres y Torres J.L."/>
            <person name="Peres C."/>
            <person name="Harrison F.H."/>
            <person name="Gibson J."/>
            <person name="Harwood C.S."/>
        </authorList>
    </citation>
    <scope>NUCLEOTIDE SEQUENCE [LARGE SCALE GENOMIC DNA]</scope>
    <source>
        <strain>ATCC BAA-98 / CGA009</strain>
    </source>
</reference>
<comment type="function">
    <text evidence="1">Catalyzes the transfer of the phosphoribosyl group of 5-phosphorylribose-1-pyrophosphate (PRPP) to anthranilate to yield N-(5'-phosphoribosyl)-anthranilate (PRA).</text>
</comment>
<comment type="catalytic activity">
    <reaction evidence="1">
        <text>N-(5-phospho-beta-D-ribosyl)anthranilate + diphosphate = 5-phospho-alpha-D-ribose 1-diphosphate + anthranilate</text>
        <dbReference type="Rhea" id="RHEA:11768"/>
        <dbReference type="ChEBI" id="CHEBI:16567"/>
        <dbReference type="ChEBI" id="CHEBI:18277"/>
        <dbReference type="ChEBI" id="CHEBI:33019"/>
        <dbReference type="ChEBI" id="CHEBI:58017"/>
        <dbReference type="EC" id="2.4.2.18"/>
    </reaction>
</comment>
<comment type="cofactor">
    <cofactor evidence="1">
        <name>Mg(2+)</name>
        <dbReference type="ChEBI" id="CHEBI:18420"/>
    </cofactor>
    <text evidence="1">Binds 2 magnesium ions per monomer.</text>
</comment>
<comment type="pathway">
    <text evidence="1">Amino-acid biosynthesis; L-tryptophan biosynthesis; L-tryptophan from chorismate: step 2/5.</text>
</comment>
<comment type="subunit">
    <text evidence="1">Homodimer.</text>
</comment>
<comment type="similarity">
    <text evidence="1">Belongs to the anthranilate phosphoribosyltransferase family.</text>
</comment>
<dbReference type="EC" id="2.4.2.18" evidence="1"/>
<dbReference type="EMBL" id="BX572602">
    <property type="protein sequence ID" value="CAE28331.1"/>
    <property type="molecule type" value="Genomic_DNA"/>
</dbReference>
<dbReference type="RefSeq" id="WP_011158439.1">
    <property type="nucleotide sequence ID" value="NZ_CP116810.1"/>
</dbReference>
<dbReference type="SMR" id="Q6N5T0"/>
<dbReference type="STRING" id="258594.RPA2890"/>
<dbReference type="GeneID" id="66893972"/>
<dbReference type="eggNOG" id="COG0547">
    <property type="taxonomic scope" value="Bacteria"/>
</dbReference>
<dbReference type="HOGENOM" id="CLU_034315_2_1_5"/>
<dbReference type="PhylomeDB" id="Q6N5T0"/>
<dbReference type="UniPathway" id="UPA00035">
    <property type="reaction ID" value="UER00041"/>
</dbReference>
<dbReference type="GO" id="GO:0005829">
    <property type="term" value="C:cytosol"/>
    <property type="evidence" value="ECO:0007669"/>
    <property type="project" value="TreeGrafter"/>
</dbReference>
<dbReference type="GO" id="GO:0004048">
    <property type="term" value="F:anthranilate phosphoribosyltransferase activity"/>
    <property type="evidence" value="ECO:0007669"/>
    <property type="project" value="UniProtKB-UniRule"/>
</dbReference>
<dbReference type="GO" id="GO:0000287">
    <property type="term" value="F:magnesium ion binding"/>
    <property type="evidence" value="ECO:0007669"/>
    <property type="project" value="UniProtKB-UniRule"/>
</dbReference>
<dbReference type="GO" id="GO:0000162">
    <property type="term" value="P:L-tryptophan biosynthetic process"/>
    <property type="evidence" value="ECO:0007669"/>
    <property type="project" value="UniProtKB-UniRule"/>
</dbReference>
<dbReference type="FunFam" id="3.40.1030.10:FF:000002">
    <property type="entry name" value="Anthranilate phosphoribosyltransferase"/>
    <property type="match status" value="1"/>
</dbReference>
<dbReference type="Gene3D" id="3.40.1030.10">
    <property type="entry name" value="Nucleoside phosphorylase/phosphoribosyltransferase catalytic domain"/>
    <property type="match status" value="1"/>
</dbReference>
<dbReference type="Gene3D" id="1.20.970.10">
    <property type="entry name" value="Transferase, Pyrimidine Nucleoside Phosphorylase, Chain C"/>
    <property type="match status" value="1"/>
</dbReference>
<dbReference type="HAMAP" id="MF_00211">
    <property type="entry name" value="TrpD"/>
    <property type="match status" value="1"/>
</dbReference>
<dbReference type="InterPro" id="IPR005940">
    <property type="entry name" value="Anthranilate_Pribosyl_Tfrase"/>
</dbReference>
<dbReference type="InterPro" id="IPR000312">
    <property type="entry name" value="Glycosyl_Trfase_fam3"/>
</dbReference>
<dbReference type="InterPro" id="IPR017459">
    <property type="entry name" value="Glycosyl_Trfase_fam3_N_dom"/>
</dbReference>
<dbReference type="InterPro" id="IPR036320">
    <property type="entry name" value="Glycosyl_Trfase_fam3_N_dom_sf"/>
</dbReference>
<dbReference type="InterPro" id="IPR035902">
    <property type="entry name" value="Nuc_phospho_transferase"/>
</dbReference>
<dbReference type="NCBIfam" id="TIGR01245">
    <property type="entry name" value="trpD"/>
    <property type="match status" value="1"/>
</dbReference>
<dbReference type="PANTHER" id="PTHR43285">
    <property type="entry name" value="ANTHRANILATE PHOSPHORIBOSYLTRANSFERASE"/>
    <property type="match status" value="1"/>
</dbReference>
<dbReference type="PANTHER" id="PTHR43285:SF2">
    <property type="entry name" value="ANTHRANILATE PHOSPHORIBOSYLTRANSFERASE"/>
    <property type="match status" value="1"/>
</dbReference>
<dbReference type="Pfam" id="PF02885">
    <property type="entry name" value="Glycos_trans_3N"/>
    <property type="match status" value="1"/>
</dbReference>
<dbReference type="Pfam" id="PF00591">
    <property type="entry name" value="Glycos_transf_3"/>
    <property type="match status" value="1"/>
</dbReference>
<dbReference type="SUPFAM" id="SSF52418">
    <property type="entry name" value="Nucleoside phosphorylase/phosphoribosyltransferase catalytic domain"/>
    <property type="match status" value="1"/>
</dbReference>
<dbReference type="SUPFAM" id="SSF47648">
    <property type="entry name" value="Nucleoside phosphorylase/phosphoribosyltransferase N-terminal domain"/>
    <property type="match status" value="1"/>
</dbReference>
<gene>
    <name evidence="1" type="primary">trpD</name>
    <name type="ordered locus">RPA2890</name>
</gene>
<evidence type="ECO:0000255" key="1">
    <source>
        <dbReference type="HAMAP-Rule" id="MF_00211"/>
    </source>
</evidence>
<sequence>MVDFKSIIAKVATGATLTRDEATDAFDAMMSGDATPSQMGALLMGLRVRGETVDEITGAVTTMRAKMLPVTAPADAVDIVGTGGDGSGSVNVSTCASFVVAGCGVTVAKHGNRALSSKSGAADVLAALGVKIDITPEQVGRCVNEAGIGFMFAPTHHPAMKNVGPTRVELATRTIFNLLGPLSNPAGVKRQMIGVFSRQWVQPLAQVLKNLGSEAVWVVHGSDGLDEITLSGTTAVAELKNGEITSFEISPEDAGLPRAPADALKGGDAQANAVALRAVLEGMPGPYRDVALLNAAATLVVAGKARDLKEGVALGTQSIDSGAAEARLKKLIAVSAAA</sequence>
<feature type="chain" id="PRO_0000227188" description="Anthranilate phosphoribosyltransferase">
    <location>
        <begin position="1"/>
        <end position="338"/>
    </location>
</feature>
<feature type="binding site" evidence="1">
    <location>
        <position position="81"/>
    </location>
    <ligand>
        <name>5-phospho-alpha-D-ribose 1-diphosphate</name>
        <dbReference type="ChEBI" id="CHEBI:58017"/>
    </ligand>
</feature>
<feature type="binding site" evidence="1">
    <location>
        <position position="81"/>
    </location>
    <ligand>
        <name>anthranilate</name>
        <dbReference type="ChEBI" id="CHEBI:16567"/>
        <label>1</label>
    </ligand>
</feature>
<feature type="binding site" evidence="1">
    <location>
        <begin position="84"/>
        <end position="85"/>
    </location>
    <ligand>
        <name>5-phospho-alpha-D-ribose 1-diphosphate</name>
        <dbReference type="ChEBI" id="CHEBI:58017"/>
    </ligand>
</feature>
<feature type="binding site" evidence="1">
    <location>
        <position position="89"/>
    </location>
    <ligand>
        <name>5-phospho-alpha-D-ribose 1-diphosphate</name>
        <dbReference type="ChEBI" id="CHEBI:58017"/>
    </ligand>
</feature>
<feature type="binding site" evidence="1">
    <location>
        <begin position="91"/>
        <end position="94"/>
    </location>
    <ligand>
        <name>5-phospho-alpha-D-ribose 1-diphosphate</name>
        <dbReference type="ChEBI" id="CHEBI:58017"/>
    </ligand>
</feature>
<feature type="binding site" evidence="1">
    <location>
        <position position="93"/>
    </location>
    <ligand>
        <name>Mg(2+)</name>
        <dbReference type="ChEBI" id="CHEBI:18420"/>
        <label>1</label>
    </ligand>
</feature>
<feature type="binding site" evidence="1">
    <location>
        <begin position="109"/>
        <end position="117"/>
    </location>
    <ligand>
        <name>5-phospho-alpha-D-ribose 1-diphosphate</name>
        <dbReference type="ChEBI" id="CHEBI:58017"/>
    </ligand>
</feature>
<feature type="binding site" evidence="1">
    <location>
        <position position="112"/>
    </location>
    <ligand>
        <name>anthranilate</name>
        <dbReference type="ChEBI" id="CHEBI:16567"/>
        <label>1</label>
    </ligand>
</feature>
<feature type="binding site" evidence="1">
    <location>
        <position position="121"/>
    </location>
    <ligand>
        <name>5-phospho-alpha-D-ribose 1-diphosphate</name>
        <dbReference type="ChEBI" id="CHEBI:58017"/>
    </ligand>
</feature>
<feature type="binding site" evidence="1">
    <location>
        <position position="167"/>
    </location>
    <ligand>
        <name>anthranilate</name>
        <dbReference type="ChEBI" id="CHEBI:16567"/>
        <label>2</label>
    </ligand>
</feature>
<feature type="binding site" evidence="1">
    <location>
        <position position="226"/>
    </location>
    <ligand>
        <name>Mg(2+)</name>
        <dbReference type="ChEBI" id="CHEBI:18420"/>
        <label>2</label>
    </ligand>
</feature>
<feature type="binding site" evidence="1">
    <location>
        <position position="227"/>
    </location>
    <ligand>
        <name>Mg(2+)</name>
        <dbReference type="ChEBI" id="CHEBI:18420"/>
        <label>1</label>
    </ligand>
</feature>
<feature type="binding site" evidence="1">
    <location>
        <position position="227"/>
    </location>
    <ligand>
        <name>Mg(2+)</name>
        <dbReference type="ChEBI" id="CHEBI:18420"/>
        <label>2</label>
    </ligand>
</feature>
<keyword id="KW-0028">Amino-acid biosynthesis</keyword>
<keyword id="KW-0057">Aromatic amino acid biosynthesis</keyword>
<keyword id="KW-0328">Glycosyltransferase</keyword>
<keyword id="KW-0460">Magnesium</keyword>
<keyword id="KW-0479">Metal-binding</keyword>
<keyword id="KW-0808">Transferase</keyword>
<keyword id="KW-0822">Tryptophan biosynthesis</keyword>
<name>TRPD_RHOPA</name>